<organism>
    <name type="scientific">Rhizobium tropici</name>
    <dbReference type="NCBI Taxonomy" id="398"/>
    <lineage>
        <taxon>Bacteria</taxon>
        <taxon>Pseudomonadati</taxon>
        <taxon>Pseudomonadota</taxon>
        <taxon>Alphaproteobacteria</taxon>
        <taxon>Hyphomicrobiales</taxon>
        <taxon>Rhizobiaceae</taxon>
        <taxon>Rhizobium/Agrobacterium group</taxon>
        <taxon>Rhizobium</taxon>
    </lineage>
</organism>
<accession>Q9EUT5</accession>
<proteinExistence type="inferred from homology"/>
<comment type="function">
    <text evidence="1">Synthesizes alpha-1,4-glucan chains using ADP-glucose.</text>
</comment>
<comment type="catalytic activity">
    <reaction evidence="1">
        <text>[(1-&gt;4)-alpha-D-glucosyl](n) + ADP-alpha-D-glucose = [(1-&gt;4)-alpha-D-glucosyl](n+1) + ADP + H(+)</text>
        <dbReference type="Rhea" id="RHEA:18189"/>
        <dbReference type="Rhea" id="RHEA-COMP:9584"/>
        <dbReference type="Rhea" id="RHEA-COMP:9587"/>
        <dbReference type="ChEBI" id="CHEBI:15378"/>
        <dbReference type="ChEBI" id="CHEBI:15444"/>
        <dbReference type="ChEBI" id="CHEBI:57498"/>
        <dbReference type="ChEBI" id="CHEBI:456216"/>
        <dbReference type="EC" id="2.4.1.21"/>
    </reaction>
</comment>
<comment type="pathway">
    <text evidence="1">Glycan biosynthesis; glycogen biosynthesis.</text>
</comment>
<comment type="similarity">
    <text evidence="1">Belongs to the glycosyltransferase 1 family. Bacterial/plant glycogen synthase subfamily.</text>
</comment>
<gene>
    <name evidence="1" type="primary">glgA</name>
</gene>
<dbReference type="EC" id="2.4.1.21" evidence="1"/>
<dbReference type="EMBL" id="AJ291603">
    <property type="protein sequence ID" value="CAC17472.1"/>
    <property type="molecule type" value="Genomic_DNA"/>
</dbReference>
<dbReference type="SMR" id="Q9EUT5"/>
<dbReference type="CAZy" id="GT5">
    <property type="family name" value="Glycosyltransferase Family 5"/>
</dbReference>
<dbReference type="UniPathway" id="UPA00164"/>
<dbReference type="GO" id="GO:0005829">
    <property type="term" value="C:cytosol"/>
    <property type="evidence" value="ECO:0007669"/>
    <property type="project" value="TreeGrafter"/>
</dbReference>
<dbReference type="GO" id="GO:0009011">
    <property type="term" value="F:alpha-1,4-glucan glucosyltransferase (ADP-glucose donor) activity"/>
    <property type="evidence" value="ECO:0007669"/>
    <property type="project" value="UniProtKB-UniRule"/>
</dbReference>
<dbReference type="GO" id="GO:0004373">
    <property type="term" value="F:alpha-1,4-glucan glucosyltransferase (UDP-glucose donor) activity"/>
    <property type="evidence" value="ECO:0007669"/>
    <property type="project" value="InterPro"/>
</dbReference>
<dbReference type="GO" id="GO:0005978">
    <property type="term" value="P:glycogen biosynthetic process"/>
    <property type="evidence" value="ECO:0007669"/>
    <property type="project" value="UniProtKB-UniRule"/>
</dbReference>
<dbReference type="CDD" id="cd03791">
    <property type="entry name" value="GT5_Glycogen_synthase_DULL1-like"/>
    <property type="match status" value="1"/>
</dbReference>
<dbReference type="Gene3D" id="3.40.50.2000">
    <property type="entry name" value="Glycogen Phosphorylase B"/>
    <property type="match status" value="2"/>
</dbReference>
<dbReference type="HAMAP" id="MF_00484">
    <property type="entry name" value="Glycogen_synth"/>
    <property type="match status" value="1"/>
</dbReference>
<dbReference type="InterPro" id="IPR001296">
    <property type="entry name" value="Glyco_trans_1"/>
</dbReference>
<dbReference type="InterPro" id="IPR011835">
    <property type="entry name" value="GS/SS"/>
</dbReference>
<dbReference type="InterPro" id="IPR013534">
    <property type="entry name" value="Starch_synth_cat_dom"/>
</dbReference>
<dbReference type="NCBIfam" id="TIGR02095">
    <property type="entry name" value="glgA"/>
    <property type="match status" value="1"/>
</dbReference>
<dbReference type="NCBIfam" id="NF001899">
    <property type="entry name" value="PRK00654.1-2"/>
    <property type="match status" value="1"/>
</dbReference>
<dbReference type="PANTHER" id="PTHR45825:SF11">
    <property type="entry name" value="ALPHA AMYLASE DOMAIN-CONTAINING PROTEIN"/>
    <property type="match status" value="1"/>
</dbReference>
<dbReference type="PANTHER" id="PTHR45825">
    <property type="entry name" value="GRANULE-BOUND STARCH SYNTHASE 1, CHLOROPLASTIC/AMYLOPLASTIC"/>
    <property type="match status" value="1"/>
</dbReference>
<dbReference type="Pfam" id="PF08323">
    <property type="entry name" value="Glyco_transf_5"/>
    <property type="match status" value="1"/>
</dbReference>
<dbReference type="Pfam" id="PF00534">
    <property type="entry name" value="Glycos_transf_1"/>
    <property type="match status" value="1"/>
</dbReference>
<dbReference type="SUPFAM" id="SSF53756">
    <property type="entry name" value="UDP-Glycosyltransferase/glycogen phosphorylase"/>
    <property type="match status" value="1"/>
</dbReference>
<reference key="1">
    <citation type="journal article" date="2001" name="J. Bacteriol.">
        <title>Enhanced symbiotic performance by Rhizobium tropici glycogen synthase mutants.</title>
        <authorList>
            <person name="Marroqui S."/>
            <person name="Zorreguieta A."/>
            <person name="Santamaria C."/>
            <person name="Temprano F."/>
            <person name="Soberon M."/>
            <person name="Megias M."/>
            <person name="Downie J.A."/>
        </authorList>
    </citation>
    <scope>NUCLEOTIDE SEQUENCE [GENOMIC DNA]</scope>
    <source>
        <strain>CIAT899</strain>
    </source>
</reference>
<sequence length="480" mass="51646">MKVLSVSSEVFPLIKTGGLADVVGALPIALKPYGVETKTLIPGYPAVMKAIRDPVVRLELPDLLGEAATILEVEHAGISFLVLDAPAYYSRTGGPYVDATGKDYPDNWRRFAALSLAGAEIAAGLLPGWRPDLVHAHDWQSALVPVYMRYYPTPELPSVLTIHNIAFQGQFGADIFPGLRLPAHAFSVEGIEYYGDVGFLKGGLQTAHALTTVSPSYAEEILTPEFGMGLEGVIASKAYNLYGIVNGIDADIWNPATDPMIAQTYSAATLKERAINRHRVVEHFGLEEDDGPIFCVVSRLTWQKGMDILAEVASEVVHMGGKLAILGAGDAALEGALFAAAGRHRGRVGVVGRHNEPMSHLMQAGCDAIIIPSRFEPCGLTQLYGLRSGCLPIVARTGGLNDTIIDANHAALQAKVATGIQFSPVTAEGLLQAMRRAMHLFQDRKVWTQMQKQGMKSDVSWGRSAERYAALYSSLVSRGA</sequence>
<evidence type="ECO:0000255" key="1">
    <source>
        <dbReference type="HAMAP-Rule" id="MF_00484"/>
    </source>
</evidence>
<feature type="chain" id="PRO_0000188639" description="Glycogen synthase">
    <location>
        <begin position="1"/>
        <end position="480"/>
    </location>
</feature>
<feature type="binding site" evidence="1">
    <location>
        <position position="15"/>
    </location>
    <ligand>
        <name>ADP-alpha-D-glucose</name>
        <dbReference type="ChEBI" id="CHEBI:57498"/>
    </ligand>
</feature>
<keyword id="KW-0320">Glycogen biosynthesis</keyword>
<keyword id="KW-0328">Glycosyltransferase</keyword>
<keyword id="KW-0808">Transferase</keyword>
<name>GLGA_RHITR</name>
<protein>
    <recommendedName>
        <fullName evidence="1">Glycogen synthase</fullName>
        <ecNumber evidence="1">2.4.1.21</ecNumber>
    </recommendedName>
    <alternativeName>
        <fullName evidence="1">Starch [bacterial glycogen] synthase</fullName>
    </alternativeName>
</protein>